<protein>
    <recommendedName>
        <fullName>Histone H3</fullName>
    </recommendedName>
</protein>
<accession>Q2UCQ0</accession>
<keyword id="KW-0007">Acetylation</keyword>
<keyword id="KW-0158">Chromosome</keyword>
<keyword id="KW-0238">DNA-binding</keyword>
<keyword id="KW-0488">Methylation</keyword>
<keyword id="KW-0544">Nucleosome core</keyword>
<keyword id="KW-0539">Nucleus</keyword>
<keyword id="KW-0597">Phosphoprotein</keyword>
<keyword id="KW-1185">Reference proteome</keyword>
<comment type="function">
    <text>Core component of nucleosome. Nucleosomes wrap and compact DNA into chromatin, limiting DNA accessibility to the cellular machineries which require DNA as a template. Histones thereby play a central role in transcription regulation, DNA repair, DNA replication and chromosomal stability. DNA accessibility is regulated via a complex set of post-translational modifications of histones, also called histone code, and nucleosome remodeling.</text>
</comment>
<comment type="subunit">
    <text>The nucleosome is a histone octamer containing two molecules each of H2A, H2B, H3 and H4 assembled in one H3-H4 heterotetramer and two H2A-H2B heterodimers. The octamer wraps approximately 147 bp of DNA.</text>
</comment>
<comment type="subcellular location">
    <subcellularLocation>
        <location evidence="1">Nucleus</location>
    </subcellularLocation>
    <subcellularLocation>
        <location evidence="1">Chromosome</location>
    </subcellularLocation>
</comment>
<comment type="PTM">
    <text evidence="1">Phosphorylated to form H3S10ph. H3S10ph promotes subsequent H3K14ac formation and is required for transcriptional activation through TBP recruitment to the promoters (By similarity).</text>
</comment>
<comment type="PTM">
    <text evidence="1">Mono-, di- and trimethylated by the COMPASS complex to form H3K4me1/2/3. H3K4me activates gene expression by regulating transcription elongation and plays a role in telomere length maintenance. H3K4me enrichment correlates with transcription levels, and occurs in a 5' to 3' gradient with H3K4me3 enrichment at the 5'-end of genes, shifting to H3K4me2 and then H3K4me1. Methylated by set2 to form H3K36me. H3K36me represses gene expression. Methylated by dot1 to form H3K79me. H3K79me is required for association of SIR proteins with telomeric regions and for telomeric silencing. The COMPASS-mediated formation of H3K4me2/3 and the dot1-mediated formation of H3K79me require H2BK123ub1 (By similarity).</text>
</comment>
<comment type="PTM">
    <text evidence="1">Acetylation of histone H3 leads to transcriptional activation. H3K14ac formation by gcn5 is promoted by H3S10ph. H3K14ac can also be formed by esa1. H3K56ac formation occurs predominantly in newly synthesized H3 molecules during G1, S and G2/M of the cell cycle and may be involved in DNA repair (By similarity).</text>
</comment>
<comment type="similarity">
    <text evidence="3">Belongs to the histone H3 family.</text>
</comment>
<comment type="caution">
    <text evidence="3">To ensure consistency between histone entries, we follow the 'Brno' nomenclature for histone modifications, with positions referring to those used in the literature for the 'closest' model organism. Due to slight variations in histone sequences between organisms and to the presence of initiator methionine in UniProtKB/Swiss-Prot sequences, the actual positions of modified amino acids in the sequence generally differ. In this entry the following conventions are used: H3K4me1/2/3 = mono-, di- and trimethylated Lys-5; H3K9ac = acetylated Lys-10; H3K9me1 = monomethylated Lys-10; H3S10ph = phosphorylated Ser-11; H3K14ac = acetylated Lys-15; H3K14me2 = dimethylated Lys-15; H3K18ac = acetylated Lys-19; H3K18me1 = monomethylated Lys-19; H3K23ac = acetylated Lys-24; H3K23me1 = monomethylated Lys-24; H3K27ac = acetylated Lys-28; H3K27me1/2/3 = mono-, di- and trimethylated Lys-28; H3K36ac = acetylated Lys-37; H3K36me1/2/3 = mono-, di- and trimethylated Lys-37; H3K56ac = acetylated Lys-57; H3K64ac = acetylated Lys-65; H3K79me1/2/3 = mono-, di- and trimethylated Lys-80.</text>
</comment>
<gene>
    <name type="primary">hhtA</name>
    <name type="ORF">AO090012000495</name>
</gene>
<feature type="initiator methionine" description="Removed" evidence="1">
    <location>
        <position position="1"/>
    </location>
</feature>
<feature type="chain" id="PRO_0000233108" description="Histone H3">
    <location>
        <begin position="2"/>
        <end position="136"/>
    </location>
</feature>
<feature type="region of interest" description="Disordered" evidence="2">
    <location>
        <begin position="1"/>
        <end position="43"/>
    </location>
</feature>
<feature type="modified residue" description="N6,N6,N6-trimethyllysine; alternate" evidence="1">
    <location>
        <position position="5"/>
    </location>
</feature>
<feature type="modified residue" description="N6,N6-dimethyllysine; alternate" evidence="1">
    <location>
        <position position="5"/>
    </location>
</feature>
<feature type="modified residue" description="N6-methyllysine; alternate" evidence="1">
    <location>
        <position position="5"/>
    </location>
</feature>
<feature type="modified residue" description="N6-acetyllysine; alternate" evidence="1">
    <location>
        <position position="10"/>
    </location>
</feature>
<feature type="modified residue" description="N6-methyllysine; alternate" evidence="1">
    <location>
        <position position="10"/>
    </location>
</feature>
<feature type="modified residue" description="Phosphoserine" evidence="1">
    <location>
        <position position="11"/>
    </location>
</feature>
<feature type="modified residue" description="N6,N6-dimethyllysine; alternate" evidence="1">
    <location>
        <position position="15"/>
    </location>
</feature>
<feature type="modified residue" description="N6-acetyllysine; alternate" evidence="1">
    <location>
        <position position="15"/>
    </location>
</feature>
<feature type="modified residue" description="N6-methyllysine; alternate" evidence="1">
    <location>
        <position position="15"/>
    </location>
</feature>
<feature type="modified residue" description="N6-acetyllysine; alternate" evidence="1">
    <location>
        <position position="19"/>
    </location>
</feature>
<feature type="modified residue" description="N6-methyllysine; alternate" evidence="1">
    <location>
        <position position="19"/>
    </location>
</feature>
<feature type="modified residue" description="N6-acetyllysine; alternate" evidence="1">
    <location>
        <position position="24"/>
    </location>
</feature>
<feature type="modified residue" description="N6-methyllysine; alternate" evidence="1">
    <location>
        <position position="24"/>
    </location>
</feature>
<feature type="modified residue" description="N6,N6,N6-trimethyllysine; alternate" evidence="1">
    <location>
        <position position="28"/>
    </location>
</feature>
<feature type="modified residue" description="N6,N6-dimethyllysine; alternate" evidence="1">
    <location>
        <position position="28"/>
    </location>
</feature>
<feature type="modified residue" description="N6-acetyllysine; alternate" evidence="1">
    <location>
        <position position="28"/>
    </location>
</feature>
<feature type="modified residue" description="N6-methyllysine; alternate" evidence="1">
    <location>
        <position position="28"/>
    </location>
</feature>
<feature type="modified residue" description="N6,N6,N6-trimethyllysine; alternate" evidence="1">
    <location>
        <position position="37"/>
    </location>
</feature>
<feature type="modified residue" description="N6,N6-dimethyllysine; alternate" evidence="1">
    <location>
        <position position="37"/>
    </location>
</feature>
<feature type="modified residue" description="N6-acetyllysine; alternate" evidence="1">
    <location>
        <position position="37"/>
    </location>
</feature>
<feature type="modified residue" description="N6-methyllysine; alternate" evidence="1">
    <location>
        <position position="37"/>
    </location>
</feature>
<feature type="modified residue" description="N6-acetyllysine" evidence="1">
    <location>
        <position position="57"/>
    </location>
</feature>
<feature type="modified residue" description="N6-acetyllysine" evidence="1">
    <location>
        <position position="65"/>
    </location>
</feature>
<feature type="modified residue" description="N6,N6,N6-trimethyllysine; alternate" evidence="1">
    <location>
        <position position="80"/>
    </location>
</feature>
<feature type="modified residue" description="N6,N6-dimethyllysine; alternate" evidence="1">
    <location>
        <position position="80"/>
    </location>
</feature>
<feature type="modified residue" description="N6-methyllysine; alternate" evidence="1">
    <location>
        <position position="80"/>
    </location>
</feature>
<organism>
    <name type="scientific">Aspergillus oryzae (strain ATCC 42149 / RIB 40)</name>
    <name type="common">Yellow koji mold</name>
    <dbReference type="NCBI Taxonomy" id="510516"/>
    <lineage>
        <taxon>Eukaryota</taxon>
        <taxon>Fungi</taxon>
        <taxon>Dikarya</taxon>
        <taxon>Ascomycota</taxon>
        <taxon>Pezizomycotina</taxon>
        <taxon>Eurotiomycetes</taxon>
        <taxon>Eurotiomycetidae</taxon>
        <taxon>Eurotiales</taxon>
        <taxon>Aspergillaceae</taxon>
        <taxon>Aspergillus</taxon>
        <taxon>Aspergillus subgen. Circumdati</taxon>
    </lineage>
</organism>
<evidence type="ECO:0000250" key="1"/>
<evidence type="ECO:0000256" key="2">
    <source>
        <dbReference type="SAM" id="MobiDB-lite"/>
    </source>
</evidence>
<evidence type="ECO:0000305" key="3"/>
<name>H3_ASPOR</name>
<proteinExistence type="inferred from homology"/>
<reference key="1">
    <citation type="journal article" date="2005" name="Nature">
        <title>Genome sequencing and analysis of Aspergillus oryzae.</title>
        <authorList>
            <person name="Machida M."/>
            <person name="Asai K."/>
            <person name="Sano M."/>
            <person name="Tanaka T."/>
            <person name="Kumagai T."/>
            <person name="Terai G."/>
            <person name="Kusumoto K."/>
            <person name="Arima T."/>
            <person name="Akita O."/>
            <person name="Kashiwagi Y."/>
            <person name="Abe K."/>
            <person name="Gomi K."/>
            <person name="Horiuchi H."/>
            <person name="Kitamoto K."/>
            <person name="Kobayashi T."/>
            <person name="Takeuchi M."/>
            <person name="Denning D.W."/>
            <person name="Galagan J.E."/>
            <person name="Nierman W.C."/>
            <person name="Yu J."/>
            <person name="Archer D.B."/>
            <person name="Bennett J.W."/>
            <person name="Bhatnagar D."/>
            <person name="Cleveland T.E."/>
            <person name="Fedorova N.D."/>
            <person name="Gotoh O."/>
            <person name="Horikawa H."/>
            <person name="Hosoyama A."/>
            <person name="Ichinomiya M."/>
            <person name="Igarashi R."/>
            <person name="Iwashita K."/>
            <person name="Juvvadi P.R."/>
            <person name="Kato M."/>
            <person name="Kato Y."/>
            <person name="Kin T."/>
            <person name="Kokubun A."/>
            <person name="Maeda H."/>
            <person name="Maeyama N."/>
            <person name="Maruyama J."/>
            <person name="Nagasaki H."/>
            <person name="Nakajima T."/>
            <person name="Oda K."/>
            <person name="Okada K."/>
            <person name="Paulsen I."/>
            <person name="Sakamoto K."/>
            <person name="Sawano T."/>
            <person name="Takahashi M."/>
            <person name="Takase K."/>
            <person name="Terabayashi Y."/>
            <person name="Wortman J.R."/>
            <person name="Yamada O."/>
            <person name="Yamagata Y."/>
            <person name="Anazawa H."/>
            <person name="Hata Y."/>
            <person name="Koide Y."/>
            <person name="Komori T."/>
            <person name="Koyama Y."/>
            <person name="Minetoki T."/>
            <person name="Suharnan S."/>
            <person name="Tanaka A."/>
            <person name="Isono K."/>
            <person name="Kuhara S."/>
            <person name="Ogasawara N."/>
            <person name="Kikuchi H."/>
        </authorList>
    </citation>
    <scope>NUCLEOTIDE SEQUENCE [LARGE SCALE GENOMIC DNA]</scope>
    <source>
        <strain>ATCC 42149 / RIB 40</strain>
    </source>
</reference>
<sequence length="136" mass="15333">MARTKQTARKSTGGKAPRKQLASKAARKAAPSTGGVKKPHRYKPGTVALREIRRYQKSTELLIRKLPFQRLVREIAQDFKSDLRFQSSAIGALQESVEAYLVSLFEDTNLCAIHAKRVTIQSKDIQLARRLRGERS</sequence>
<dbReference type="EMBL" id="BA000052">
    <property type="protein sequence ID" value="BAE60665.1"/>
    <property type="molecule type" value="Genomic_DNA"/>
</dbReference>
<dbReference type="SMR" id="Q2UCQ0"/>
<dbReference type="STRING" id="510516.Q2UCQ0"/>
<dbReference type="EnsemblFungi" id="BAE60665">
    <property type="protein sequence ID" value="BAE60665"/>
    <property type="gene ID" value="AO090012000495"/>
</dbReference>
<dbReference type="VEuPathDB" id="FungiDB:AO090012000495"/>
<dbReference type="HOGENOM" id="CLU_078295_4_0_1"/>
<dbReference type="OMA" id="HIFAEMA"/>
<dbReference type="Proteomes" id="UP000006564">
    <property type="component" value="Chromosome 4"/>
</dbReference>
<dbReference type="GO" id="GO:0000786">
    <property type="term" value="C:nucleosome"/>
    <property type="evidence" value="ECO:0007669"/>
    <property type="project" value="UniProtKB-KW"/>
</dbReference>
<dbReference type="GO" id="GO:0005634">
    <property type="term" value="C:nucleus"/>
    <property type="evidence" value="ECO:0007669"/>
    <property type="project" value="UniProtKB-SubCell"/>
</dbReference>
<dbReference type="GO" id="GO:0003677">
    <property type="term" value="F:DNA binding"/>
    <property type="evidence" value="ECO:0007669"/>
    <property type="project" value="UniProtKB-KW"/>
</dbReference>
<dbReference type="GO" id="GO:0046982">
    <property type="term" value="F:protein heterodimerization activity"/>
    <property type="evidence" value="ECO:0007669"/>
    <property type="project" value="InterPro"/>
</dbReference>
<dbReference type="GO" id="GO:0030527">
    <property type="term" value="F:structural constituent of chromatin"/>
    <property type="evidence" value="ECO:0007669"/>
    <property type="project" value="InterPro"/>
</dbReference>
<dbReference type="CDD" id="cd22911">
    <property type="entry name" value="HFD_H3"/>
    <property type="match status" value="1"/>
</dbReference>
<dbReference type="FunFam" id="1.10.20.10:FF:000010">
    <property type="entry name" value="Histone H3"/>
    <property type="match status" value="1"/>
</dbReference>
<dbReference type="Gene3D" id="1.10.20.10">
    <property type="entry name" value="Histone, subunit A"/>
    <property type="match status" value="1"/>
</dbReference>
<dbReference type="InterPro" id="IPR009072">
    <property type="entry name" value="Histone-fold"/>
</dbReference>
<dbReference type="InterPro" id="IPR007125">
    <property type="entry name" value="Histone_H2A/H2B/H3"/>
</dbReference>
<dbReference type="InterPro" id="IPR000164">
    <property type="entry name" value="Histone_H3/CENP-A"/>
</dbReference>
<dbReference type="PANTHER" id="PTHR11426">
    <property type="entry name" value="HISTONE H3"/>
    <property type="match status" value="1"/>
</dbReference>
<dbReference type="Pfam" id="PF00125">
    <property type="entry name" value="Histone"/>
    <property type="match status" value="1"/>
</dbReference>
<dbReference type="PRINTS" id="PR00622">
    <property type="entry name" value="HISTONEH3"/>
</dbReference>
<dbReference type="SMART" id="SM00428">
    <property type="entry name" value="H3"/>
    <property type="match status" value="1"/>
</dbReference>
<dbReference type="SUPFAM" id="SSF47113">
    <property type="entry name" value="Histone-fold"/>
    <property type="match status" value="1"/>
</dbReference>
<dbReference type="PROSITE" id="PS00322">
    <property type="entry name" value="HISTONE_H3_1"/>
    <property type="match status" value="1"/>
</dbReference>
<dbReference type="PROSITE" id="PS00959">
    <property type="entry name" value="HISTONE_H3_2"/>
    <property type="match status" value="1"/>
</dbReference>